<proteinExistence type="inferred from homology"/>
<reference key="1">
    <citation type="journal article" date="2006" name="Appl. Environ. Microbiol.">
        <title>Complete genome sequence of the marine, chemolithoautotrophic, ammonia-oxidizing bacterium Nitrosococcus oceani ATCC 19707.</title>
        <authorList>
            <person name="Klotz M.G."/>
            <person name="Arp D.J."/>
            <person name="Chain P.S.G."/>
            <person name="El-Sheikh A.F."/>
            <person name="Hauser L.J."/>
            <person name="Hommes N.G."/>
            <person name="Larimer F.W."/>
            <person name="Malfatti S.A."/>
            <person name="Norton J.M."/>
            <person name="Poret-Peterson A.T."/>
            <person name="Vergez L.M."/>
            <person name="Ward B.B."/>
        </authorList>
    </citation>
    <scope>NUCLEOTIDE SEQUENCE [LARGE SCALE GENOMIC DNA]</scope>
    <source>
        <strain>ATCC 19707 / BCRC 17464 / JCM 30415 / NCIMB 11848 / C-107</strain>
    </source>
</reference>
<protein>
    <recommendedName>
        <fullName evidence="1">Large ribosomal subunit protein uL15</fullName>
    </recommendedName>
    <alternativeName>
        <fullName evidence="3">50S ribosomal protein L15</fullName>
    </alternativeName>
</protein>
<sequence length="144" mass="15477">MRLNTISSAPGAKQAEKRVGRGIGSGWGKTCGRGHKGQKSRSGGFHKVGFEGGQMPLQRRVPKFGFSSRKARFRVEVRLDQLTKVNTDTVDIAALVKARLIPKWAKRVKVIASGKLDKPVSLQGIMVSAGARRAIEAAGGRIGE</sequence>
<name>RL15_NITOC</name>
<feature type="chain" id="PRO_0000251533" description="Large ribosomal subunit protein uL15">
    <location>
        <begin position="1"/>
        <end position="144"/>
    </location>
</feature>
<feature type="region of interest" description="Disordered" evidence="2">
    <location>
        <begin position="1"/>
        <end position="52"/>
    </location>
</feature>
<feature type="compositionally biased region" description="Gly residues" evidence="2">
    <location>
        <begin position="21"/>
        <end position="31"/>
    </location>
</feature>
<comment type="function">
    <text evidence="1">Binds to the 23S rRNA.</text>
</comment>
<comment type="subunit">
    <text evidence="1">Part of the 50S ribosomal subunit.</text>
</comment>
<comment type="similarity">
    <text evidence="1">Belongs to the universal ribosomal protein uL15 family.</text>
</comment>
<keyword id="KW-1185">Reference proteome</keyword>
<keyword id="KW-0687">Ribonucleoprotein</keyword>
<keyword id="KW-0689">Ribosomal protein</keyword>
<keyword id="KW-0694">RNA-binding</keyword>
<keyword id="KW-0699">rRNA-binding</keyword>
<evidence type="ECO:0000255" key="1">
    <source>
        <dbReference type="HAMAP-Rule" id="MF_01341"/>
    </source>
</evidence>
<evidence type="ECO:0000256" key="2">
    <source>
        <dbReference type="SAM" id="MobiDB-lite"/>
    </source>
</evidence>
<evidence type="ECO:0000305" key="3"/>
<gene>
    <name evidence="1" type="primary">rplO</name>
    <name type="ordered locus">Noc_2306</name>
</gene>
<organism>
    <name type="scientific">Nitrosococcus oceani (strain ATCC 19707 / BCRC 17464 / JCM 30415 / NCIMB 11848 / C-107)</name>
    <dbReference type="NCBI Taxonomy" id="323261"/>
    <lineage>
        <taxon>Bacteria</taxon>
        <taxon>Pseudomonadati</taxon>
        <taxon>Pseudomonadota</taxon>
        <taxon>Gammaproteobacteria</taxon>
        <taxon>Chromatiales</taxon>
        <taxon>Chromatiaceae</taxon>
        <taxon>Nitrosococcus</taxon>
    </lineage>
</organism>
<accession>Q3J8T2</accession>
<dbReference type="EMBL" id="CP000127">
    <property type="protein sequence ID" value="ABA58764.1"/>
    <property type="molecule type" value="Genomic_DNA"/>
</dbReference>
<dbReference type="RefSeq" id="WP_011330915.1">
    <property type="nucleotide sequence ID" value="NC_007484.1"/>
</dbReference>
<dbReference type="SMR" id="Q3J8T2"/>
<dbReference type="FunCoup" id="Q3J8T2">
    <property type="interactions" value="659"/>
</dbReference>
<dbReference type="STRING" id="323261.Noc_2306"/>
<dbReference type="KEGG" id="noc:Noc_2306"/>
<dbReference type="eggNOG" id="COG0200">
    <property type="taxonomic scope" value="Bacteria"/>
</dbReference>
<dbReference type="HOGENOM" id="CLU_055188_4_2_6"/>
<dbReference type="InParanoid" id="Q3J8T2"/>
<dbReference type="Proteomes" id="UP000006838">
    <property type="component" value="Chromosome"/>
</dbReference>
<dbReference type="GO" id="GO:0022625">
    <property type="term" value="C:cytosolic large ribosomal subunit"/>
    <property type="evidence" value="ECO:0007669"/>
    <property type="project" value="TreeGrafter"/>
</dbReference>
<dbReference type="GO" id="GO:0019843">
    <property type="term" value="F:rRNA binding"/>
    <property type="evidence" value="ECO:0007669"/>
    <property type="project" value="UniProtKB-UniRule"/>
</dbReference>
<dbReference type="GO" id="GO:0003735">
    <property type="term" value="F:structural constituent of ribosome"/>
    <property type="evidence" value="ECO:0007669"/>
    <property type="project" value="InterPro"/>
</dbReference>
<dbReference type="GO" id="GO:0006412">
    <property type="term" value="P:translation"/>
    <property type="evidence" value="ECO:0007669"/>
    <property type="project" value="UniProtKB-UniRule"/>
</dbReference>
<dbReference type="Gene3D" id="3.100.10.10">
    <property type="match status" value="1"/>
</dbReference>
<dbReference type="HAMAP" id="MF_01341">
    <property type="entry name" value="Ribosomal_uL15"/>
    <property type="match status" value="1"/>
</dbReference>
<dbReference type="InterPro" id="IPR030878">
    <property type="entry name" value="Ribosomal_uL15"/>
</dbReference>
<dbReference type="InterPro" id="IPR021131">
    <property type="entry name" value="Ribosomal_uL15/eL18"/>
</dbReference>
<dbReference type="InterPro" id="IPR036227">
    <property type="entry name" value="Ribosomal_uL15/eL18_sf"/>
</dbReference>
<dbReference type="InterPro" id="IPR005749">
    <property type="entry name" value="Ribosomal_uL15_bac-type"/>
</dbReference>
<dbReference type="InterPro" id="IPR001196">
    <property type="entry name" value="Ribosomal_uL15_CS"/>
</dbReference>
<dbReference type="NCBIfam" id="TIGR01071">
    <property type="entry name" value="rplO_bact"/>
    <property type="match status" value="1"/>
</dbReference>
<dbReference type="PANTHER" id="PTHR12934">
    <property type="entry name" value="50S RIBOSOMAL PROTEIN L15"/>
    <property type="match status" value="1"/>
</dbReference>
<dbReference type="PANTHER" id="PTHR12934:SF11">
    <property type="entry name" value="LARGE RIBOSOMAL SUBUNIT PROTEIN UL15M"/>
    <property type="match status" value="1"/>
</dbReference>
<dbReference type="Pfam" id="PF00828">
    <property type="entry name" value="Ribosomal_L27A"/>
    <property type="match status" value="1"/>
</dbReference>
<dbReference type="SUPFAM" id="SSF52080">
    <property type="entry name" value="Ribosomal proteins L15p and L18e"/>
    <property type="match status" value="1"/>
</dbReference>
<dbReference type="PROSITE" id="PS00475">
    <property type="entry name" value="RIBOSOMAL_L15"/>
    <property type="match status" value="1"/>
</dbReference>